<protein>
    <recommendedName>
        <fullName evidence="1">Dihydroorotate dehydrogenase (quinone)</fullName>
        <ecNumber evidence="1">1.3.5.2</ecNumber>
    </recommendedName>
    <alternativeName>
        <fullName evidence="1">DHOdehase</fullName>
        <shortName evidence="1">DHOD</shortName>
        <shortName evidence="1">DHODase</shortName>
    </alternativeName>
    <alternativeName>
        <fullName evidence="1">Dihydroorotate oxidase</fullName>
    </alternativeName>
</protein>
<name>PYRD_GLAP5</name>
<accession>B8F848</accession>
<comment type="function">
    <text evidence="1">Catalyzes the conversion of dihydroorotate to orotate with quinone as electron acceptor.</text>
</comment>
<comment type="catalytic activity">
    <reaction evidence="1">
        <text>(S)-dihydroorotate + a quinone = orotate + a quinol</text>
        <dbReference type="Rhea" id="RHEA:30187"/>
        <dbReference type="ChEBI" id="CHEBI:24646"/>
        <dbReference type="ChEBI" id="CHEBI:30839"/>
        <dbReference type="ChEBI" id="CHEBI:30864"/>
        <dbReference type="ChEBI" id="CHEBI:132124"/>
        <dbReference type="EC" id="1.3.5.2"/>
    </reaction>
</comment>
<comment type="cofactor">
    <cofactor evidence="1">
        <name>FMN</name>
        <dbReference type="ChEBI" id="CHEBI:58210"/>
    </cofactor>
    <text evidence="1">Binds 1 FMN per subunit.</text>
</comment>
<comment type="pathway">
    <text evidence="1">Pyrimidine metabolism; UMP biosynthesis via de novo pathway; orotate from (S)-dihydroorotate (quinone route): step 1/1.</text>
</comment>
<comment type="subunit">
    <text evidence="1">Monomer.</text>
</comment>
<comment type="subcellular location">
    <subcellularLocation>
        <location evidence="1">Cell membrane</location>
        <topology evidence="1">Peripheral membrane protein</topology>
    </subcellularLocation>
</comment>
<comment type="similarity">
    <text evidence="1">Belongs to the dihydroorotate dehydrogenase family. Type 2 subfamily.</text>
</comment>
<dbReference type="EC" id="1.3.5.2" evidence="1"/>
<dbReference type="EMBL" id="CP001321">
    <property type="protein sequence ID" value="ACL33500.1"/>
    <property type="molecule type" value="Genomic_DNA"/>
</dbReference>
<dbReference type="RefSeq" id="WP_015940039.1">
    <property type="nucleotide sequence ID" value="NC_011852.1"/>
</dbReference>
<dbReference type="SMR" id="B8F848"/>
<dbReference type="STRING" id="557723.HAPS_2040"/>
<dbReference type="KEGG" id="hap:HAPS_2040"/>
<dbReference type="PATRIC" id="fig|557723.8.peg.2024"/>
<dbReference type="HOGENOM" id="CLU_013640_2_0_6"/>
<dbReference type="UniPathway" id="UPA00070">
    <property type="reaction ID" value="UER00946"/>
</dbReference>
<dbReference type="Proteomes" id="UP000006743">
    <property type="component" value="Chromosome"/>
</dbReference>
<dbReference type="GO" id="GO:0005737">
    <property type="term" value="C:cytoplasm"/>
    <property type="evidence" value="ECO:0007669"/>
    <property type="project" value="InterPro"/>
</dbReference>
<dbReference type="GO" id="GO:0005886">
    <property type="term" value="C:plasma membrane"/>
    <property type="evidence" value="ECO:0007669"/>
    <property type="project" value="UniProtKB-SubCell"/>
</dbReference>
<dbReference type="GO" id="GO:0106430">
    <property type="term" value="F:dihydroorotate dehydrogenase (quinone) activity"/>
    <property type="evidence" value="ECO:0007669"/>
    <property type="project" value="UniProtKB-EC"/>
</dbReference>
<dbReference type="GO" id="GO:0006207">
    <property type="term" value="P:'de novo' pyrimidine nucleobase biosynthetic process"/>
    <property type="evidence" value="ECO:0007669"/>
    <property type="project" value="InterPro"/>
</dbReference>
<dbReference type="GO" id="GO:0044205">
    <property type="term" value="P:'de novo' UMP biosynthetic process"/>
    <property type="evidence" value="ECO:0007669"/>
    <property type="project" value="UniProtKB-UniRule"/>
</dbReference>
<dbReference type="CDD" id="cd04738">
    <property type="entry name" value="DHOD_2_like"/>
    <property type="match status" value="1"/>
</dbReference>
<dbReference type="FunFam" id="3.20.20.70:FF:000028">
    <property type="entry name" value="Dihydroorotate dehydrogenase (quinone)"/>
    <property type="match status" value="1"/>
</dbReference>
<dbReference type="Gene3D" id="3.20.20.70">
    <property type="entry name" value="Aldolase class I"/>
    <property type="match status" value="1"/>
</dbReference>
<dbReference type="HAMAP" id="MF_00225">
    <property type="entry name" value="DHO_dh_type2"/>
    <property type="match status" value="1"/>
</dbReference>
<dbReference type="InterPro" id="IPR013785">
    <property type="entry name" value="Aldolase_TIM"/>
</dbReference>
<dbReference type="InterPro" id="IPR050074">
    <property type="entry name" value="DHO_dehydrogenase"/>
</dbReference>
<dbReference type="InterPro" id="IPR012135">
    <property type="entry name" value="Dihydroorotate_DH_1_2"/>
</dbReference>
<dbReference type="InterPro" id="IPR005719">
    <property type="entry name" value="Dihydroorotate_DH_2"/>
</dbReference>
<dbReference type="InterPro" id="IPR005720">
    <property type="entry name" value="Dihydroorotate_DH_cat"/>
</dbReference>
<dbReference type="InterPro" id="IPR001295">
    <property type="entry name" value="Dihydroorotate_DH_CS"/>
</dbReference>
<dbReference type="NCBIfam" id="NF003644">
    <property type="entry name" value="PRK05286.1-1"/>
    <property type="match status" value="1"/>
</dbReference>
<dbReference type="NCBIfam" id="NF003645">
    <property type="entry name" value="PRK05286.1-2"/>
    <property type="match status" value="1"/>
</dbReference>
<dbReference type="NCBIfam" id="NF003646">
    <property type="entry name" value="PRK05286.1-4"/>
    <property type="match status" value="1"/>
</dbReference>
<dbReference type="NCBIfam" id="NF003652">
    <property type="entry name" value="PRK05286.2-5"/>
    <property type="match status" value="1"/>
</dbReference>
<dbReference type="NCBIfam" id="TIGR01036">
    <property type="entry name" value="pyrD_sub2"/>
    <property type="match status" value="1"/>
</dbReference>
<dbReference type="PANTHER" id="PTHR48109:SF4">
    <property type="entry name" value="DIHYDROOROTATE DEHYDROGENASE (QUINONE), MITOCHONDRIAL"/>
    <property type="match status" value="1"/>
</dbReference>
<dbReference type="PANTHER" id="PTHR48109">
    <property type="entry name" value="DIHYDROOROTATE DEHYDROGENASE (QUINONE), MITOCHONDRIAL-RELATED"/>
    <property type="match status" value="1"/>
</dbReference>
<dbReference type="Pfam" id="PF01180">
    <property type="entry name" value="DHO_dh"/>
    <property type="match status" value="1"/>
</dbReference>
<dbReference type="PIRSF" id="PIRSF000164">
    <property type="entry name" value="DHO_oxidase"/>
    <property type="match status" value="1"/>
</dbReference>
<dbReference type="SUPFAM" id="SSF51395">
    <property type="entry name" value="FMN-linked oxidoreductases"/>
    <property type="match status" value="1"/>
</dbReference>
<dbReference type="PROSITE" id="PS00911">
    <property type="entry name" value="DHODEHASE_1"/>
    <property type="match status" value="1"/>
</dbReference>
<proteinExistence type="inferred from homology"/>
<gene>
    <name evidence="1" type="primary">pyrD</name>
    <name type="ordered locus">HAPS_2040</name>
</gene>
<organism>
    <name type="scientific">Glaesserella parasuis serovar 5 (strain SH0165)</name>
    <name type="common">Haemophilus parasuis</name>
    <dbReference type="NCBI Taxonomy" id="557723"/>
    <lineage>
        <taxon>Bacteria</taxon>
        <taxon>Pseudomonadati</taxon>
        <taxon>Pseudomonadota</taxon>
        <taxon>Gammaproteobacteria</taxon>
        <taxon>Pasteurellales</taxon>
        <taxon>Pasteurellaceae</taxon>
        <taxon>Glaesserella</taxon>
    </lineage>
</organism>
<sequence length="335" mass="35993">MYPLIKKALFNLDAENAHQLAIQSLKLFGKTPFSLACSLPDNPTEVMGLRFKNPIGLAAGADKNGEAIDGFAKLGFGFIEVGTVTPVAQDGNPRPRQFRILEAEGIINRNGFNNLGVDVLIENVKKAKYNGILGINIGKNATTPIEHSLDDYQICLRKVYPHASYVTVNISSPNTKNLRSLQYGEALDDLLRSLKAEQAQLSQKFGGYKPLVLKIAPDLTAEEIASVADSLVHHQIDAVIAGNTTLSRDSVAGLPFADQQGGLSGKPLNALSTQLISQLSQELNGKLPIIGSGGIHSVQSGQEKINAGASLLQLYSAMIYQGPDLVRQLVRKISI</sequence>
<reference key="1">
    <citation type="journal article" date="2009" name="J. Bacteriol.">
        <title>Complete genome sequence of Haemophilus parasuis SH0165.</title>
        <authorList>
            <person name="Yue M."/>
            <person name="Yang F."/>
            <person name="Yang J."/>
            <person name="Bei W."/>
            <person name="Cai X."/>
            <person name="Chen L."/>
            <person name="Dong J."/>
            <person name="Zhou R."/>
            <person name="Jin M."/>
            <person name="Jin Q."/>
            <person name="Chen H."/>
        </authorList>
    </citation>
    <scope>NUCLEOTIDE SEQUENCE [LARGE SCALE GENOMIC DNA]</scope>
    <source>
        <strain>SH0165</strain>
    </source>
</reference>
<feature type="chain" id="PRO_1000195078" description="Dihydroorotate dehydrogenase (quinone)">
    <location>
        <begin position="1"/>
        <end position="335"/>
    </location>
</feature>
<feature type="active site" description="Nucleophile" evidence="1">
    <location>
        <position position="172"/>
    </location>
</feature>
<feature type="binding site" evidence="1">
    <location>
        <begin position="59"/>
        <end position="63"/>
    </location>
    <ligand>
        <name>FMN</name>
        <dbReference type="ChEBI" id="CHEBI:58210"/>
    </ligand>
</feature>
<feature type="binding site" evidence="1">
    <location>
        <position position="63"/>
    </location>
    <ligand>
        <name>substrate</name>
    </ligand>
</feature>
<feature type="binding site" evidence="1">
    <location>
        <position position="83"/>
    </location>
    <ligand>
        <name>FMN</name>
        <dbReference type="ChEBI" id="CHEBI:58210"/>
    </ligand>
</feature>
<feature type="binding site" evidence="1">
    <location>
        <begin position="108"/>
        <end position="112"/>
    </location>
    <ligand>
        <name>substrate</name>
    </ligand>
</feature>
<feature type="binding site" evidence="1">
    <location>
        <position position="136"/>
    </location>
    <ligand>
        <name>FMN</name>
        <dbReference type="ChEBI" id="CHEBI:58210"/>
    </ligand>
</feature>
<feature type="binding site" evidence="1">
    <location>
        <position position="169"/>
    </location>
    <ligand>
        <name>FMN</name>
        <dbReference type="ChEBI" id="CHEBI:58210"/>
    </ligand>
</feature>
<feature type="binding site" evidence="1">
    <location>
        <position position="169"/>
    </location>
    <ligand>
        <name>substrate</name>
    </ligand>
</feature>
<feature type="binding site" evidence="1">
    <location>
        <position position="174"/>
    </location>
    <ligand>
        <name>substrate</name>
    </ligand>
</feature>
<feature type="binding site" evidence="1">
    <location>
        <position position="214"/>
    </location>
    <ligand>
        <name>FMN</name>
        <dbReference type="ChEBI" id="CHEBI:58210"/>
    </ligand>
</feature>
<feature type="binding site" evidence="1">
    <location>
        <position position="242"/>
    </location>
    <ligand>
        <name>FMN</name>
        <dbReference type="ChEBI" id="CHEBI:58210"/>
    </ligand>
</feature>
<feature type="binding site" evidence="1">
    <location>
        <begin position="243"/>
        <end position="244"/>
    </location>
    <ligand>
        <name>substrate</name>
    </ligand>
</feature>
<feature type="binding site" evidence="1">
    <location>
        <position position="265"/>
    </location>
    <ligand>
        <name>FMN</name>
        <dbReference type="ChEBI" id="CHEBI:58210"/>
    </ligand>
</feature>
<feature type="binding site" evidence="1">
    <location>
        <position position="294"/>
    </location>
    <ligand>
        <name>FMN</name>
        <dbReference type="ChEBI" id="CHEBI:58210"/>
    </ligand>
</feature>
<feature type="binding site" evidence="1">
    <location>
        <begin position="315"/>
        <end position="316"/>
    </location>
    <ligand>
        <name>FMN</name>
        <dbReference type="ChEBI" id="CHEBI:58210"/>
    </ligand>
</feature>
<evidence type="ECO:0000255" key="1">
    <source>
        <dbReference type="HAMAP-Rule" id="MF_00225"/>
    </source>
</evidence>
<keyword id="KW-1003">Cell membrane</keyword>
<keyword id="KW-0285">Flavoprotein</keyword>
<keyword id="KW-0288">FMN</keyword>
<keyword id="KW-0472">Membrane</keyword>
<keyword id="KW-0560">Oxidoreductase</keyword>
<keyword id="KW-0665">Pyrimidine biosynthesis</keyword>
<keyword id="KW-1185">Reference proteome</keyword>